<proteinExistence type="inferred from homology"/>
<comment type="function">
    <text evidence="1">PsaA and PsaB bind P700, the primary electron donor of photosystem I (PSI), as well as the electron acceptors A0, A1 and FX. PSI is a plastocyanin/cytochrome c6-ferredoxin oxidoreductase, converting photonic excitation into a charge separation, which transfers an electron from the donor P700 chlorophyll pair to the spectroscopically characterized acceptors A0, A1, FX, FA and FB in turn. Oxidized P700 is reduced on the lumenal side of the thylakoid membrane by plastocyanin or cytochrome c6.</text>
</comment>
<comment type="catalytic activity">
    <reaction evidence="1">
        <text>reduced [plastocyanin] + hnu + oxidized [2Fe-2S]-[ferredoxin] = oxidized [plastocyanin] + reduced [2Fe-2S]-[ferredoxin]</text>
        <dbReference type="Rhea" id="RHEA:30407"/>
        <dbReference type="Rhea" id="RHEA-COMP:10000"/>
        <dbReference type="Rhea" id="RHEA-COMP:10001"/>
        <dbReference type="Rhea" id="RHEA-COMP:10039"/>
        <dbReference type="Rhea" id="RHEA-COMP:10040"/>
        <dbReference type="ChEBI" id="CHEBI:29036"/>
        <dbReference type="ChEBI" id="CHEBI:30212"/>
        <dbReference type="ChEBI" id="CHEBI:33737"/>
        <dbReference type="ChEBI" id="CHEBI:33738"/>
        <dbReference type="ChEBI" id="CHEBI:49552"/>
        <dbReference type="EC" id="1.97.1.12"/>
    </reaction>
</comment>
<comment type="cofactor">
    <text evidence="1">PSI electron transfer chain: 5 chlorophyll a, 1 chlorophyll a', 2 phylloquinones and 3 4Fe-4S clusters. PSI core antenna: 90 chlorophyll a, 22 carotenoids, 3 phospholipids and 1 galactolipid. P700 is a chlorophyll a/chlorophyll a' dimer, A0 is one or more chlorophyll a, A1 is one or both phylloquinones and FX is a shared 4Fe-4S iron-sulfur center.</text>
</comment>
<comment type="subunit">
    <text evidence="1">The PsaA/B heterodimer binds the P700 chlorophyll special pair and subsequent electron acceptors. PSI consists of a core antenna complex that captures photons, and an electron transfer chain that converts photonic excitation into a charge separation. The cyanobacterial PSI reaction center is composed of one copy each of PsaA,B,C,D,E,F,I,J,K,L,M and X, and forms trimeric complexes.</text>
</comment>
<comment type="subcellular location">
    <subcellularLocation>
        <location evidence="1">Cellular thylakoid membrane</location>
        <topology evidence="1">Multi-pass membrane protein</topology>
    </subcellularLocation>
</comment>
<comment type="similarity">
    <text evidence="1">Belongs to the PsaA/PsaB family.</text>
</comment>
<reference key="1">
    <citation type="journal article" date="2006" name="Proc. Natl. Acad. Sci. U.S.A.">
        <title>Genome sequence of Synechococcus CC9311: insights into adaptation to a coastal environment.</title>
        <authorList>
            <person name="Palenik B."/>
            <person name="Ren Q."/>
            <person name="Dupont C.L."/>
            <person name="Myers G.S."/>
            <person name="Heidelberg J.F."/>
            <person name="Badger J.H."/>
            <person name="Madupu R."/>
            <person name="Nelson W.C."/>
            <person name="Brinkac L.M."/>
            <person name="Dodson R.J."/>
            <person name="Durkin A.S."/>
            <person name="Daugherty S.C."/>
            <person name="Sullivan S.A."/>
            <person name="Khouri H."/>
            <person name="Mohamoud Y."/>
            <person name="Halpin R."/>
            <person name="Paulsen I.T."/>
        </authorList>
    </citation>
    <scope>NUCLEOTIDE SEQUENCE [LARGE SCALE GENOMIC DNA]</scope>
    <source>
        <strain>CC9311</strain>
    </source>
</reference>
<protein>
    <recommendedName>
        <fullName evidence="1">Photosystem I P700 chlorophyll a apoprotein A2</fullName>
        <ecNumber evidence="1">1.97.1.12</ecNumber>
    </recommendedName>
    <alternativeName>
        <fullName evidence="1">PsaB</fullName>
    </alternativeName>
</protein>
<accession>Q0ID47</accession>
<sequence>MATKFPSFSQGLAQDPTTRRIWYGIATAHDFESHDGMTEEKLYQKLFSTHFGHLAIIGLWVSGNLFHIAWQGNFEQWVSDPLHVRPIAHAIWDPHFGQGAIDAFTQAGASSPVNIAYSGLYHWFYTIGMTTNAELYQGSIFMMILSAWALFAGWLHLQPKFRPSLAWFKNAESRLNHHLAVLFGFSSIAWTGHLVHVAIPESRGQHVGWDNFLSVMPHPAGLGPFFTGNWGVYAQNPDTTGQIFGTAEGSGTAILTFLGGFHPQTEALWLTDIAHHHLAIGVIFVIAGHMYRTNFGIGHSIREILEAHNPPTGTPGDLGAGHKGLYDTINNSLHFQLGLALASLGVITSLVAQHMYAMPSYAFIAKDYTTQAALYTHHQYIAIALMCGAFAHGAIFFIRDYDPEANKDNVLGRMLEHKEAIISHLSWVSLFLGFHTLGLYVHNDVVVAFGTPEKQILVEPVFAQFVQAASGKAIYGFDVLLANAGGAAANANAAYMGGWMDAINGVRGSNDLFLPIGPGDFLVHHAIALGLHTTTLILVKGALDARGSKLMPDKKDFGYSFPCDGPGRGGTCDISAWDAFYLAVFWALNTVGWVTFYWHWKHLAIWQGNVAQFNESSTYLMGWFRDYLWLNSSQLINGYNPFGSNNLAVWSWMFLFGHLVWATGFMFLISWRGYWQELIETIVWAHERSPIANMMGWRDKPVALSIVQARVVGLAHFTVGYVLTYGAFLIASTSGKFG</sequence>
<gene>
    <name evidence="1" type="primary">psaB</name>
    <name type="ordered locus">sync_0394</name>
</gene>
<feature type="chain" id="PRO_0000300023" description="Photosystem I P700 chlorophyll a apoprotein A2">
    <location>
        <begin position="1"/>
        <end position="738"/>
    </location>
</feature>
<feature type="transmembrane region" description="Helical; Name=I" evidence="1">
    <location>
        <begin position="46"/>
        <end position="69"/>
    </location>
</feature>
<feature type="transmembrane region" description="Helical; Name=II" evidence="1">
    <location>
        <begin position="135"/>
        <end position="158"/>
    </location>
</feature>
<feature type="transmembrane region" description="Helical; Name=III" evidence="1">
    <location>
        <begin position="175"/>
        <end position="199"/>
    </location>
</feature>
<feature type="transmembrane region" description="Helical; Name=IV" evidence="1">
    <location>
        <begin position="273"/>
        <end position="291"/>
    </location>
</feature>
<feature type="transmembrane region" description="Helical; Name=V" evidence="1">
    <location>
        <begin position="333"/>
        <end position="356"/>
    </location>
</feature>
<feature type="transmembrane region" description="Helical; Name=VI" evidence="1">
    <location>
        <begin position="372"/>
        <end position="398"/>
    </location>
</feature>
<feature type="transmembrane region" description="Helical; Name=VII" evidence="1">
    <location>
        <begin position="420"/>
        <end position="442"/>
    </location>
</feature>
<feature type="transmembrane region" description="Helical; Name=VIII" evidence="1">
    <location>
        <begin position="521"/>
        <end position="539"/>
    </location>
</feature>
<feature type="transmembrane region" description="Helical; Name=IX" evidence="1">
    <location>
        <begin position="579"/>
        <end position="600"/>
    </location>
</feature>
<feature type="transmembrane region" description="Helical; Name=X" evidence="1">
    <location>
        <begin position="647"/>
        <end position="669"/>
    </location>
</feature>
<feature type="transmembrane region" description="Helical; Name=XI" evidence="1">
    <location>
        <begin position="711"/>
        <end position="731"/>
    </location>
</feature>
<feature type="binding site" evidence="1">
    <location>
        <position position="563"/>
    </location>
    <ligand>
        <name>[4Fe-4S] cluster</name>
        <dbReference type="ChEBI" id="CHEBI:49883"/>
        <note>ligand shared between dimeric partners</note>
    </ligand>
</feature>
<feature type="binding site" evidence="1">
    <location>
        <position position="572"/>
    </location>
    <ligand>
        <name>[4Fe-4S] cluster</name>
        <dbReference type="ChEBI" id="CHEBI:49883"/>
        <note>ligand shared between dimeric partners</note>
    </ligand>
</feature>
<feature type="binding site" description="axial binding residue" evidence="1">
    <location>
        <position position="658"/>
    </location>
    <ligand>
        <name>chlorophyll a</name>
        <dbReference type="ChEBI" id="CHEBI:58416"/>
        <label>B1</label>
    </ligand>
    <ligandPart>
        <name>Mg</name>
        <dbReference type="ChEBI" id="CHEBI:25107"/>
    </ligandPart>
</feature>
<feature type="binding site" description="axial binding residue" evidence="1">
    <location>
        <position position="666"/>
    </location>
    <ligand>
        <name>chlorophyll a</name>
        <dbReference type="ChEBI" id="CHEBI:58416"/>
        <label>B3</label>
    </ligand>
    <ligandPart>
        <name>Mg</name>
        <dbReference type="ChEBI" id="CHEBI:25107"/>
    </ligandPart>
</feature>
<feature type="binding site" evidence="1">
    <location>
        <position position="674"/>
    </location>
    <ligand>
        <name>chlorophyll a</name>
        <dbReference type="ChEBI" id="CHEBI:58416"/>
        <label>B3</label>
    </ligand>
</feature>
<feature type="binding site" evidence="1">
    <location>
        <position position="675"/>
    </location>
    <ligand>
        <name>phylloquinone</name>
        <dbReference type="ChEBI" id="CHEBI:18067"/>
        <label>B</label>
    </ligand>
</feature>
<evidence type="ECO:0000255" key="1">
    <source>
        <dbReference type="HAMAP-Rule" id="MF_00482"/>
    </source>
</evidence>
<organism>
    <name type="scientific">Synechococcus sp. (strain CC9311)</name>
    <dbReference type="NCBI Taxonomy" id="64471"/>
    <lineage>
        <taxon>Bacteria</taxon>
        <taxon>Bacillati</taxon>
        <taxon>Cyanobacteriota</taxon>
        <taxon>Cyanophyceae</taxon>
        <taxon>Synechococcales</taxon>
        <taxon>Synechococcaceae</taxon>
        <taxon>Synechococcus</taxon>
    </lineage>
</organism>
<keyword id="KW-0004">4Fe-4S</keyword>
<keyword id="KW-0148">Chlorophyll</keyword>
<keyword id="KW-0157">Chromophore</keyword>
<keyword id="KW-0249">Electron transport</keyword>
<keyword id="KW-0408">Iron</keyword>
<keyword id="KW-0411">Iron-sulfur</keyword>
<keyword id="KW-0460">Magnesium</keyword>
<keyword id="KW-0472">Membrane</keyword>
<keyword id="KW-0479">Metal-binding</keyword>
<keyword id="KW-0560">Oxidoreductase</keyword>
<keyword id="KW-0602">Photosynthesis</keyword>
<keyword id="KW-0603">Photosystem I</keyword>
<keyword id="KW-1185">Reference proteome</keyword>
<keyword id="KW-0793">Thylakoid</keyword>
<keyword id="KW-0812">Transmembrane</keyword>
<keyword id="KW-1133">Transmembrane helix</keyword>
<keyword id="KW-0813">Transport</keyword>
<dbReference type="EC" id="1.97.1.12" evidence="1"/>
<dbReference type="EMBL" id="CP000435">
    <property type="protein sequence ID" value="ABI45613.1"/>
    <property type="molecule type" value="Genomic_DNA"/>
</dbReference>
<dbReference type="RefSeq" id="WP_011618364.1">
    <property type="nucleotide sequence ID" value="NC_008319.1"/>
</dbReference>
<dbReference type="SMR" id="Q0ID47"/>
<dbReference type="STRING" id="64471.sync_0394"/>
<dbReference type="KEGG" id="syg:sync_0394"/>
<dbReference type="eggNOG" id="COG2885">
    <property type="taxonomic scope" value="Bacteria"/>
</dbReference>
<dbReference type="HOGENOM" id="CLU_016126_1_0_3"/>
<dbReference type="OrthoDB" id="499313at2"/>
<dbReference type="Proteomes" id="UP000001961">
    <property type="component" value="Chromosome"/>
</dbReference>
<dbReference type="GO" id="GO:0009522">
    <property type="term" value="C:photosystem I"/>
    <property type="evidence" value="ECO:0007669"/>
    <property type="project" value="UniProtKB-KW"/>
</dbReference>
<dbReference type="GO" id="GO:0031676">
    <property type="term" value="C:plasma membrane-derived thylakoid membrane"/>
    <property type="evidence" value="ECO:0007669"/>
    <property type="project" value="UniProtKB-SubCell"/>
</dbReference>
<dbReference type="GO" id="GO:0051539">
    <property type="term" value="F:4 iron, 4 sulfur cluster binding"/>
    <property type="evidence" value="ECO:0007669"/>
    <property type="project" value="UniProtKB-KW"/>
</dbReference>
<dbReference type="GO" id="GO:0016168">
    <property type="term" value="F:chlorophyll binding"/>
    <property type="evidence" value="ECO:0007669"/>
    <property type="project" value="UniProtKB-KW"/>
</dbReference>
<dbReference type="GO" id="GO:0009055">
    <property type="term" value="F:electron transfer activity"/>
    <property type="evidence" value="ECO:0007669"/>
    <property type="project" value="UniProtKB-UniRule"/>
</dbReference>
<dbReference type="GO" id="GO:0000287">
    <property type="term" value="F:magnesium ion binding"/>
    <property type="evidence" value="ECO:0007669"/>
    <property type="project" value="UniProtKB-UniRule"/>
</dbReference>
<dbReference type="GO" id="GO:0016491">
    <property type="term" value="F:oxidoreductase activity"/>
    <property type="evidence" value="ECO:0007669"/>
    <property type="project" value="UniProtKB-KW"/>
</dbReference>
<dbReference type="GO" id="GO:0015979">
    <property type="term" value="P:photosynthesis"/>
    <property type="evidence" value="ECO:0007669"/>
    <property type="project" value="UniProtKB-UniRule"/>
</dbReference>
<dbReference type="FunFam" id="1.20.1130.10:FF:000001">
    <property type="entry name" value="Photosystem I P700 chlorophyll a apoprotein A2"/>
    <property type="match status" value="1"/>
</dbReference>
<dbReference type="Gene3D" id="1.20.1130.10">
    <property type="entry name" value="Photosystem I PsaA/PsaB"/>
    <property type="match status" value="1"/>
</dbReference>
<dbReference type="HAMAP" id="MF_00482">
    <property type="entry name" value="PSI_PsaB"/>
    <property type="match status" value="1"/>
</dbReference>
<dbReference type="InterPro" id="IPR001280">
    <property type="entry name" value="PSI_PsaA/B"/>
</dbReference>
<dbReference type="InterPro" id="IPR020586">
    <property type="entry name" value="PSI_PsaA/B_CS"/>
</dbReference>
<dbReference type="InterPro" id="IPR036408">
    <property type="entry name" value="PSI_PsaA/B_sf"/>
</dbReference>
<dbReference type="InterPro" id="IPR006244">
    <property type="entry name" value="PSI_PsaB"/>
</dbReference>
<dbReference type="NCBIfam" id="TIGR01336">
    <property type="entry name" value="psaB"/>
    <property type="match status" value="1"/>
</dbReference>
<dbReference type="PANTHER" id="PTHR30128">
    <property type="entry name" value="OUTER MEMBRANE PROTEIN, OMPA-RELATED"/>
    <property type="match status" value="1"/>
</dbReference>
<dbReference type="PANTHER" id="PTHR30128:SF19">
    <property type="entry name" value="PHOTOSYSTEM I P700 CHLOROPHYLL A APOPROTEIN A1-RELATED"/>
    <property type="match status" value="1"/>
</dbReference>
<dbReference type="Pfam" id="PF00223">
    <property type="entry name" value="PsaA_PsaB"/>
    <property type="match status" value="1"/>
</dbReference>
<dbReference type="PIRSF" id="PIRSF002905">
    <property type="entry name" value="PSI_A"/>
    <property type="match status" value="1"/>
</dbReference>
<dbReference type="PRINTS" id="PR00257">
    <property type="entry name" value="PHOTSYSPSAAB"/>
</dbReference>
<dbReference type="SUPFAM" id="SSF81558">
    <property type="entry name" value="Photosystem I subunits PsaA/PsaB"/>
    <property type="match status" value="1"/>
</dbReference>
<dbReference type="PROSITE" id="PS00419">
    <property type="entry name" value="PHOTOSYSTEM_I_PSAAB"/>
    <property type="match status" value="1"/>
</dbReference>
<name>PSAB_SYNS3</name>